<dbReference type="EC" id="2.1.1.228" evidence="1"/>
<dbReference type="EMBL" id="CP000733">
    <property type="protein sequence ID" value="ABS77931.1"/>
    <property type="molecule type" value="Genomic_DNA"/>
</dbReference>
<dbReference type="RefSeq" id="WP_005771381.1">
    <property type="nucleotide sequence ID" value="NC_009727.1"/>
</dbReference>
<dbReference type="SMR" id="A9KEE9"/>
<dbReference type="KEGG" id="cbd:CBUD_1631"/>
<dbReference type="HOGENOM" id="CLU_047363_0_1_6"/>
<dbReference type="Proteomes" id="UP000008555">
    <property type="component" value="Chromosome"/>
</dbReference>
<dbReference type="GO" id="GO:0005829">
    <property type="term" value="C:cytosol"/>
    <property type="evidence" value="ECO:0007669"/>
    <property type="project" value="TreeGrafter"/>
</dbReference>
<dbReference type="GO" id="GO:0052906">
    <property type="term" value="F:tRNA (guanine(37)-N1)-methyltransferase activity"/>
    <property type="evidence" value="ECO:0007669"/>
    <property type="project" value="UniProtKB-UniRule"/>
</dbReference>
<dbReference type="GO" id="GO:0002939">
    <property type="term" value="P:tRNA N1-guanine methylation"/>
    <property type="evidence" value="ECO:0007669"/>
    <property type="project" value="TreeGrafter"/>
</dbReference>
<dbReference type="CDD" id="cd18080">
    <property type="entry name" value="TrmD-like"/>
    <property type="match status" value="1"/>
</dbReference>
<dbReference type="FunFam" id="1.10.1270.20:FF:000001">
    <property type="entry name" value="tRNA (guanine-N(1)-)-methyltransferase"/>
    <property type="match status" value="1"/>
</dbReference>
<dbReference type="FunFam" id="3.40.1280.10:FF:000001">
    <property type="entry name" value="tRNA (guanine-N(1)-)-methyltransferase"/>
    <property type="match status" value="1"/>
</dbReference>
<dbReference type="Gene3D" id="3.40.1280.10">
    <property type="match status" value="1"/>
</dbReference>
<dbReference type="Gene3D" id="1.10.1270.20">
    <property type="entry name" value="tRNA(m1g37)methyltransferase, domain 2"/>
    <property type="match status" value="1"/>
</dbReference>
<dbReference type="HAMAP" id="MF_00605">
    <property type="entry name" value="TrmD"/>
    <property type="match status" value="1"/>
</dbReference>
<dbReference type="InterPro" id="IPR029028">
    <property type="entry name" value="Alpha/beta_knot_MTases"/>
</dbReference>
<dbReference type="InterPro" id="IPR023148">
    <property type="entry name" value="tRNA_m1G_MeTrfase_C_sf"/>
</dbReference>
<dbReference type="InterPro" id="IPR002649">
    <property type="entry name" value="tRNA_m1G_MeTrfase_TrmD"/>
</dbReference>
<dbReference type="InterPro" id="IPR029026">
    <property type="entry name" value="tRNA_m1G_MTases_N"/>
</dbReference>
<dbReference type="InterPro" id="IPR016009">
    <property type="entry name" value="tRNA_MeTrfase_TRMD/TRM10"/>
</dbReference>
<dbReference type="NCBIfam" id="NF000648">
    <property type="entry name" value="PRK00026.1"/>
    <property type="match status" value="1"/>
</dbReference>
<dbReference type="NCBIfam" id="TIGR00088">
    <property type="entry name" value="trmD"/>
    <property type="match status" value="1"/>
</dbReference>
<dbReference type="PANTHER" id="PTHR46417">
    <property type="entry name" value="TRNA (GUANINE-N(1)-)-METHYLTRANSFERASE"/>
    <property type="match status" value="1"/>
</dbReference>
<dbReference type="PANTHER" id="PTHR46417:SF1">
    <property type="entry name" value="TRNA (GUANINE-N(1)-)-METHYLTRANSFERASE"/>
    <property type="match status" value="1"/>
</dbReference>
<dbReference type="Pfam" id="PF01746">
    <property type="entry name" value="tRNA_m1G_MT"/>
    <property type="match status" value="1"/>
</dbReference>
<dbReference type="PIRSF" id="PIRSF000386">
    <property type="entry name" value="tRNA_mtase"/>
    <property type="match status" value="1"/>
</dbReference>
<dbReference type="SUPFAM" id="SSF75217">
    <property type="entry name" value="alpha/beta knot"/>
    <property type="match status" value="1"/>
</dbReference>
<gene>
    <name evidence="1" type="primary">trmD</name>
    <name type="ordered locus">CBUD_1631</name>
</gene>
<comment type="function">
    <text evidence="1">Specifically methylates guanosine-37 in various tRNAs.</text>
</comment>
<comment type="catalytic activity">
    <reaction evidence="1">
        <text>guanosine(37) in tRNA + S-adenosyl-L-methionine = N(1)-methylguanosine(37) in tRNA + S-adenosyl-L-homocysteine + H(+)</text>
        <dbReference type="Rhea" id="RHEA:36899"/>
        <dbReference type="Rhea" id="RHEA-COMP:10145"/>
        <dbReference type="Rhea" id="RHEA-COMP:10147"/>
        <dbReference type="ChEBI" id="CHEBI:15378"/>
        <dbReference type="ChEBI" id="CHEBI:57856"/>
        <dbReference type="ChEBI" id="CHEBI:59789"/>
        <dbReference type="ChEBI" id="CHEBI:73542"/>
        <dbReference type="ChEBI" id="CHEBI:74269"/>
        <dbReference type="EC" id="2.1.1.228"/>
    </reaction>
</comment>
<comment type="subunit">
    <text evidence="1">Homodimer.</text>
</comment>
<comment type="subcellular location">
    <subcellularLocation>
        <location evidence="1">Cytoplasm</location>
    </subcellularLocation>
</comment>
<comment type="similarity">
    <text evidence="1">Belongs to the RNA methyltransferase TrmD family.</text>
</comment>
<feature type="chain" id="PRO_1000082514" description="tRNA (guanine-N(1)-)-methyltransferase">
    <location>
        <begin position="1"/>
        <end position="246"/>
    </location>
</feature>
<feature type="binding site" evidence="1">
    <location>
        <position position="114"/>
    </location>
    <ligand>
        <name>S-adenosyl-L-methionine</name>
        <dbReference type="ChEBI" id="CHEBI:59789"/>
    </ligand>
</feature>
<feature type="binding site" evidence="1">
    <location>
        <begin position="134"/>
        <end position="139"/>
    </location>
    <ligand>
        <name>S-adenosyl-L-methionine</name>
        <dbReference type="ChEBI" id="CHEBI:59789"/>
    </ligand>
</feature>
<proteinExistence type="inferred from homology"/>
<evidence type="ECO:0000255" key="1">
    <source>
        <dbReference type="HAMAP-Rule" id="MF_00605"/>
    </source>
</evidence>
<sequence length="246" mass="27655">MKLIIGVITLFPQMFDALKSGVIGRALKQDRLTLSFWNPRDYATDPHRTVDDRPYGGGPGMVMKFEPLALALKAAKAQLGENTKVIHLTPQGKLLTQAIVREKIHASPLILLAGRYEGIDERLIEAEVDEEWSIGDYILSGGELPAMVLIDAMTRLLPGVLGHKDSASQDSFTAGLLDYPHYTRPEKIADRPVPSVLLSGDHEAISRWRLKQSLGRTWQRRQDLIKRRSLSENEQRLLDEFFEESS</sequence>
<protein>
    <recommendedName>
        <fullName evidence="1">tRNA (guanine-N(1)-)-methyltransferase</fullName>
        <ecNumber evidence="1">2.1.1.228</ecNumber>
    </recommendedName>
    <alternativeName>
        <fullName evidence="1">M1G-methyltransferase</fullName>
    </alternativeName>
    <alternativeName>
        <fullName evidence="1">tRNA [GM37] methyltransferase</fullName>
    </alternativeName>
</protein>
<organism>
    <name type="scientific">Coxiella burnetii (strain Dugway 5J108-111)</name>
    <dbReference type="NCBI Taxonomy" id="434922"/>
    <lineage>
        <taxon>Bacteria</taxon>
        <taxon>Pseudomonadati</taxon>
        <taxon>Pseudomonadota</taxon>
        <taxon>Gammaproteobacteria</taxon>
        <taxon>Legionellales</taxon>
        <taxon>Coxiellaceae</taxon>
        <taxon>Coxiella</taxon>
    </lineage>
</organism>
<keyword id="KW-0963">Cytoplasm</keyword>
<keyword id="KW-0489">Methyltransferase</keyword>
<keyword id="KW-0949">S-adenosyl-L-methionine</keyword>
<keyword id="KW-0808">Transferase</keyword>
<keyword id="KW-0819">tRNA processing</keyword>
<name>TRMD_COXBN</name>
<accession>A9KEE9</accession>
<reference key="1">
    <citation type="journal article" date="2009" name="Infect. Immun.">
        <title>Comparative genomics reveal extensive transposon-mediated genomic plasticity and diversity among potential effector proteins within the genus Coxiella.</title>
        <authorList>
            <person name="Beare P.A."/>
            <person name="Unsworth N."/>
            <person name="Andoh M."/>
            <person name="Voth D.E."/>
            <person name="Omsland A."/>
            <person name="Gilk S.D."/>
            <person name="Williams K.P."/>
            <person name="Sobral B.W."/>
            <person name="Kupko J.J. III"/>
            <person name="Porcella S.F."/>
            <person name="Samuel J.E."/>
            <person name="Heinzen R.A."/>
        </authorList>
    </citation>
    <scope>NUCLEOTIDE SEQUENCE [LARGE SCALE GENOMIC DNA]</scope>
    <source>
        <strain>Dugway 5J108-111</strain>
    </source>
</reference>